<reference key="1">
    <citation type="submission" date="2008-05" db="EMBL/GenBank/DDBJ databases">
        <title>Complete genome sequence of Clostridium botulinum E3 str. Alaska E43.</title>
        <authorList>
            <person name="Brinkac L.M."/>
            <person name="Brown J.L."/>
            <person name="Bruce D."/>
            <person name="Detter C."/>
            <person name="Munk C."/>
            <person name="Smith L.A."/>
            <person name="Smith T.J."/>
            <person name="Sutton G."/>
            <person name="Brettin T.S."/>
        </authorList>
    </citation>
    <scope>NUCLEOTIDE SEQUENCE [LARGE SCALE GENOMIC DNA]</scope>
    <source>
        <strain>Alaska E43 / Type E3</strain>
    </source>
</reference>
<accession>B2V0W0</accession>
<name>RECR_CLOBA</name>
<proteinExistence type="inferred from homology"/>
<organism>
    <name type="scientific">Clostridium botulinum (strain Alaska E43 / Type E3)</name>
    <dbReference type="NCBI Taxonomy" id="508767"/>
    <lineage>
        <taxon>Bacteria</taxon>
        <taxon>Bacillati</taxon>
        <taxon>Bacillota</taxon>
        <taxon>Clostridia</taxon>
        <taxon>Eubacteriales</taxon>
        <taxon>Clostridiaceae</taxon>
        <taxon>Clostridium</taxon>
    </lineage>
</organism>
<evidence type="ECO:0000255" key="1">
    <source>
        <dbReference type="HAMAP-Rule" id="MF_00017"/>
    </source>
</evidence>
<protein>
    <recommendedName>
        <fullName evidence="1">Recombination protein RecR</fullName>
    </recommendedName>
</protein>
<dbReference type="EMBL" id="CP001078">
    <property type="protein sequence ID" value="ACD52275.1"/>
    <property type="molecule type" value="Genomic_DNA"/>
</dbReference>
<dbReference type="RefSeq" id="WP_004443400.1">
    <property type="nucleotide sequence ID" value="NC_010723.1"/>
</dbReference>
<dbReference type="SMR" id="B2V0W0"/>
<dbReference type="KEGG" id="cbt:CLH_3224"/>
<dbReference type="HOGENOM" id="CLU_060739_1_0_9"/>
<dbReference type="GO" id="GO:0003677">
    <property type="term" value="F:DNA binding"/>
    <property type="evidence" value="ECO:0007669"/>
    <property type="project" value="UniProtKB-UniRule"/>
</dbReference>
<dbReference type="GO" id="GO:0008270">
    <property type="term" value="F:zinc ion binding"/>
    <property type="evidence" value="ECO:0007669"/>
    <property type="project" value="UniProtKB-KW"/>
</dbReference>
<dbReference type="GO" id="GO:0006310">
    <property type="term" value="P:DNA recombination"/>
    <property type="evidence" value="ECO:0007669"/>
    <property type="project" value="UniProtKB-UniRule"/>
</dbReference>
<dbReference type="GO" id="GO:0006281">
    <property type="term" value="P:DNA repair"/>
    <property type="evidence" value="ECO:0007669"/>
    <property type="project" value="UniProtKB-UniRule"/>
</dbReference>
<dbReference type="CDD" id="cd01025">
    <property type="entry name" value="TOPRIM_recR"/>
    <property type="match status" value="1"/>
</dbReference>
<dbReference type="Gene3D" id="3.30.60.80">
    <property type="match status" value="1"/>
</dbReference>
<dbReference type="Gene3D" id="3.40.1360.10">
    <property type="match status" value="1"/>
</dbReference>
<dbReference type="Gene3D" id="6.10.250.240">
    <property type="match status" value="1"/>
</dbReference>
<dbReference type="Gene3D" id="1.10.8.420">
    <property type="entry name" value="RecR Domain 1"/>
    <property type="match status" value="1"/>
</dbReference>
<dbReference type="HAMAP" id="MF_00017">
    <property type="entry name" value="RecR"/>
    <property type="match status" value="1"/>
</dbReference>
<dbReference type="InterPro" id="IPR000093">
    <property type="entry name" value="DNA_Rcmb_RecR"/>
</dbReference>
<dbReference type="InterPro" id="IPR023627">
    <property type="entry name" value="Rcmb_RecR"/>
</dbReference>
<dbReference type="InterPro" id="IPR015967">
    <property type="entry name" value="Rcmb_RecR_Znf"/>
</dbReference>
<dbReference type="InterPro" id="IPR006171">
    <property type="entry name" value="TOPRIM_dom"/>
</dbReference>
<dbReference type="InterPro" id="IPR034137">
    <property type="entry name" value="TOPRIM_RecR"/>
</dbReference>
<dbReference type="NCBIfam" id="TIGR00615">
    <property type="entry name" value="recR"/>
    <property type="match status" value="1"/>
</dbReference>
<dbReference type="PANTHER" id="PTHR30446">
    <property type="entry name" value="RECOMBINATION PROTEIN RECR"/>
    <property type="match status" value="1"/>
</dbReference>
<dbReference type="PANTHER" id="PTHR30446:SF0">
    <property type="entry name" value="RECOMBINATION PROTEIN RECR"/>
    <property type="match status" value="1"/>
</dbReference>
<dbReference type="Pfam" id="PF21175">
    <property type="entry name" value="RecR_C"/>
    <property type="match status" value="1"/>
</dbReference>
<dbReference type="Pfam" id="PF21176">
    <property type="entry name" value="RecR_HhH"/>
    <property type="match status" value="1"/>
</dbReference>
<dbReference type="Pfam" id="PF02132">
    <property type="entry name" value="RecR_ZnF"/>
    <property type="match status" value="1"/>
</dbReference>
<dbReference type="Pfam" id="PF13662">
    <property type="entry name" value="Toprim_4"/>
    <property type="match status" value="1"/>
</dbReference>
<dbReference type="SMART" id="SM00493">
    <property type="entry name" value="TOPRIM"/>
    <property type="match status" value="1"/>
</dbReference>
<dbReference type="SUPFAM" id="SSF111304">
    <property type="entry name" value="Recombination protein RecR"/>
    <property type="match status" value="1"/>
</dbReference>
<dbReference type="PROSITE" id="PS01300">
    <property type="entry name" value="RECR"/>
    <property type="match status" value="1"/>
</dbReference>
<dbReference type="PROSITE" id="PS50880">
    <property type="entry name" value="TOPRIM"/>
    <property type="match status" value="1"/>
</dbReference>
<feature type="chain" id="PRO_1000089720" description="Recombination protein RecR">
    <location>
        <begin position="1"/>
        <end position="198"/>
    </location>
</feature>
<feature type="domain" description="Toprim" evidence="1">
    <location>
        <begin position="81"/>
        <end position="175"/>
    </location>
</feature>
<feature type="zinc finger region" description="C4-type" evidence="1">
    <location>
        <begin position="58"/>
        <end position="73"/>
    </location>
</feature>
<gene>
    <name evidence="1" type="primary">recR</name>
    <name type="ordered locus">CLH_3224</name>
</gene>
<comment type="function">
    <text evidence="1">May play a role in DNA repair. It seems to be involved in an RecBC-independent recombinational process of DNA repair. It may act with RecF and RecO.</text>
</comment>
<comment type="similarity">
    <text evidence="1">Belongs to the RecR family.</text>
</comment>
<sequence length="198" mass="21960">MEFYPVAIEKLIEEFAKLPSIGKKTAQRLTLHILNLPDDEVREFAKALVKAKGTIKYCSTCGNFTDTDPCALCSNPNRDKSTICVVEQPKDIMTMEKVKEFNGLYHVLHGNISPMQGRGPQDIKIRELVARMNEEVKEVILATNPNIEGEATAMYIAKVLKPLDVKVTRIAAGIPVGGDLEYADEVTLSKALEGRKEI</sequence>
<keyword id="KW-0227">DNA damage</keyword>
<keyword id="KW-0233">DNA recombination</keyword>
<keyword id="KW-0234">DNA repair</keyword>
<keyword id="KW-0479">Metal-binding</keyword>
<keyword id="KW-0862">Zinc</keyword>
<keyword id="KW-0863">Zinc-finger</keyword>